<accession>Q9H1D0</accession>
<accession>A4D2I8</accession>
<accession>Q8TDL3</accession>
<accession>Q8WXR8</accession>
<accession>Q96LC5</accession>
<accession>Q9H1D1</accession>
<accession>Q9H296</accession>
<gene>
    <name type="primary">TRPV6</name>
    <name type="synonym">ECAC2</name>
</gene>
<reference key="1">
    <citation type="journal article" date="2000" name="Biochem. Biophys. Res. Commun.">
        <title>Human calcium transport protein CaT1.</title>
        <authorList>
            <person name="Peng J.-B."/>
            <person name="Chen X.Z."/>
            <person name="Berger U.V."/>
            <person name="Weremowicz S."/>
            <person name="Morton C.C."/>
            <person name="Vassilev P.M."/>
            <person name="Brown E.M."/>
            <person name="Hediger M.A."/>
        </authorList>
    </citation>
    <scope>NUCLEOTIDE SEQUENCE [MRNA] (ISOFORM 1)</scope>
    <scope>FUNCTION</scope>
    <scope>SUBCELLULAR LOCATION</scope>
    <scope>TISSUE SPECIFICITY</scope>
    <scope>TRANSPORTER ACTIVITY</scope>
</reference>
<reference key="2">
    <citation type="journal article" date="2001" name="BMC Physiol.">
        <title>1,25-dihydroxyvitamin D3 increases the expression of the CaT1 epithelial calcium channel in the Caco-2 human intestinal cell line.</title>
        <authorList>
            <person name="Wood R.J."/>
            <person name="Tchack L."/>
            <person name="Taparia S."/>
        </authorList>
    </citation>
    <scope>NUCLEOTIDE SEQUENCE [MRNA] (ISOFORM 1)</scope>
    <source>
        <tissue>Kidney</tissue>
    </source>
</reference>
<reference key="3">
    <citation type="journal article" date="2001" name="Genomics">
        <title>Structural conservation of the genes encoding CaT1, CaT2, and related cation channels.</title>
        <authorList>
            <person name="Peng J.-B."/>
            <person name="Brown E.M."/>
            <person name="Hediger M.A."/>
        </authorList>
    </citation>
    <scope>NUCLEOTIDE SEQUENCE [MRNA] (ISOFORM 1)</scope>
    <source>
        <tissue>Kidney</tissue>
    </source>
</reference>
<reference key="4">
    <citation type="journal article" date="2001" name="J. Biol. Chem.">
        <title>Expression of CaT-like, a novel calcium selective channel, correlates with the malignancy of prostate cancer.</title>
        <authorList>
            <person name="Wissenbach U."/>
            <person name="Niemeyer B.A."/>
            <person name="Fixemer T."/>
            <person name="Schneidewind A."/>
            <person name="Trost C."/>
            <person name="Cavalie A."/>
            <person name="Reus K."/>
            <person name="Meese E."/>
            <person name="Bonkhoff H."/>
            <person name="Flockerzi V."/>
        </authorList>
    </citation>
    <scope>NUCLEOTIDE SEQUENCE [MRNA] (ISOFORM 1)</scope>
    <scope>VARIANTS ARG-197; VAL-418 AND THR-721</scope>
    <scope>FUNCTION</scope>
    <scope>SUBCELLULAR LOCATION</scope>
    <scope>TISSUE SPECIFICITY</scope>
    <scope>TRANSPORTER ACTIVITY</scope>
    <source>
        <tissue>Placenta</tissue>
    </source>
</reference>
<reference key="5">
    <citation type="submission" date="2001-03" db="EMBL/GenBank/DDBJ databases">
        <title>A CaT1 splice variant lacking ankyrin repeats.</title>
        <authorList>
            <person name="Peng J.-B."/>
            <person name="Brown E.M."/>
            <person name="Hediger M.A."/>
        </authorList>
    </citation>
    <scope>NUCLEOTIDE SEQUENCE [MRNA] (ISOFORM 2)</scope>
</reference>
<reference key="6">
    <citation type="submission" date="2002-05" db="EMBL/GenBank/DDBJ databases">
        <authorList>
            <person name="Kelsell R.E."/>
        </authorList>
    </citation>
    <scope>NUCLEOTIDE SEQUENCE [MRNA] (ISOFORM 1)</scope>
</reference>
<reference key="7">
    <citation type="submission" date="2004-04" db="EMBL/GenBank/DDBJ databases">
        <authorList>
            <consortium name="SeattleSNPs variation discovery resource"/>
        </authorList>
    </citation>
    <scope>NUCLEOTIDE SEQUENCE [GENOMIC DNA]</scope>
    <scope>VARIANTS ARG-197; VAL-418 AND THR-721</scope>
</reference>
<reference key="8">
    <citation type="journal article" date="2004" name="Nat. Genet.">
        <title>Complete sequencing and characterization of 21,243 full-length human cDNAs.</title>
        <authorList>
            <person name="Ota T."/>
            <person name="Suzuki Y."/>
            <person name="Nishikawa T."/>
            <person name="Otsuki T."/>
            <person name="Sugiyama T."/>
            <person name="Irie R."/>
            <person name="Wakamatsu A."/>
            <person name="Hayashi K."/>
            <person name="Sato H."/>
            <person name="Nagai K."/>
            <person name="Kimura K."/>
            <person name="Makita H."/>
            <person name="Sekine M."/>
            <person name="Obayashi M."/>
            <person name="Nishi T."/>
            <person name="Shibahara T."/>
            <person name="Tanaka T."/>
            <person name="Ishii S."/>
            <person name="Yamamoto J."/>
            <person name="Saito K."/>
            <person name="Kawai Y."/>
            <person name="Isono Y."/>
            <person name="Nakamura Y."/>
            <person name="Nagahari K."/>
            <person name="Murakami K."/>
            <person name="Yasuda T."/>
            <person name="Iwayanagi T."/>
            <person name="Wagatsuma M."/>
            <person name="Shiratori A."/>
            <person name="Sudo H."/>
            <person name="Hosoiri T."/>
            <person name="Kaku Y."/>
            <person name="Kodaira H."/>
            <person name="Kondo H."/>
            <person name="Sugawara M."/>
            <person name="Takahashi M."/>
            <person name="Kanda K."/>
            <person name="Yokoi T."/>
            <person name="Furuya T."/>
            <person name="Kikkawa E."/>
            <person name="Omura Y."/>
            <person name="Abe K."/>
            <person name="Kamihara K."/>
            <person name="Katsuta N."/>
            <person name="Sato K."/>
            <person name="Tanikawa M."/>
            <person name="Yamazaki M."/>
            <person name="Ninomiya K."/>
            <person name="Ishibashi T."/>
            <person name="Yamashita H."/>
            <person name="Murakawa K."/>
            <person name="Fujimori K."/>
            <person name="Tanai H."/>
            <person name="Kimata M."/>
            <person name="Watanabe M."/>
            <person name="Hiraoka S."/>
            <person name="Chiba Y."/>
            <person name="Ishida S."/>
            <person name="Ono Y."/>
            <person name="Takiguchi S."/>
            <person name="Watanabe S."/>
            <person name="Yosida M."/>
            <person name="Hotuta T."/>
            <person name="Kusano J."/>
            <person name="Kanehori K."/>
            <person name="Takahashi-Fujii A."/>
            <person name="Hara H."/>
            <person name="Tanase T.-O."/>
            <person name="Nomura Y."/>
            <person name="Togiya S."/>
            <person name="Komai F."/>
            <person name="Hara R."/>
            <person name="Takeuchi K."/>
            <person name="Arita M."/>
            <person name="Imose N."/>
            <person name="Musashino K."/>
            <person name="Yuuki H."/>
            <person name="Oshima A."/>
            <person name="Sasaki N."/>
            <person name="Aotsuka S."/>
            <person name="Yoshikawa Y."/>
            <person name="Matsunawa H."/>
            <person name="Ichihara T."/>
            <person name="Shiohata N."/>
            <person name="Sano S."/>
            <person name="Moriya S."/>
            <person name="Momiyama H."/>
            <person name="Satoh N."/>
            <person name="Takami S."/>
            <person name="Terashima Y."/>
            <person name="Suzuki O."/>
            <person name="Nakagawa S."/>
            <person name="Senoh A."/>
            <person name="Mizoguchi H."/>
            <person name="Goto Y."/>
            <person name="Shimizu F."/>
            <person name="Wakebe H."/>
            <person name="Hishigaki H."/>
            <person name="Watanabe T."/>
            <person name="Sugiyama A."/>
            <person name="Takemoto M."/>
            <person name="Kawakami B."/>
            <person name="Yamazaki M."/>
            <person name="Watanabe K."/>
            <person name="Kumagai A."/>
            <person name="Itakura S."/>
            <person name="Fukuzumi Y."/>
            <person name="Fujimori Y."/>
            <person name="Komiyama M."/>
            <person name="Tashiro H."/>
            <person name="Tanigami A."/>
            <person name="Fujiwara T."/>
            <person name="Ono T."/>
            <person name="Yamada K."/>
            <person name="Fujii Y."/>
            <person name="Ozaki K."/>
            <person name="Hirao M."/>
            <person name="Ohmori Y."/>
            <person name="Kawabata A."/>
            <person name="Hikiji T."/>
            <person name="Kobatake N."/>
            <person name="Inagaki H."/>
            <person name="Ikema Y."/>
            <person name="Okamoto S."/>
            <person name="Okitani R."/>
            <person name="Kawakami T."/>
            <person name="Noguchi S."/>
            <person name="Itoh T."/>
            <person name="Shigeta K."/>
            <person name="Senba T."/>
            <person name="Matsumura K."/>
            <person name="Nakajima Y."/>
            <person name="Mizuno T."/>
            <person name="Morinaga M."/>
            <person name="Sasaki M."/>
            <person name="Togashi T."/>
            <person name="Oyama M."/>
            <person name="Hata H."/>
            <person name="Watanabe M."/>
            <person name="Komatsu T."/>
            <person name="Mizushima-Sugano J."/>
            <person name="Satoh T."/>
            <person name="Shirai Y."/>
            <person name="Takahashi Y."/>
            <person name="Nakagawa K."/>
            <person name="Okumura K."/>
            <person name="Nagase T."/>
            <person name="Nomura N."/>
            <person name="Kikuchi H."/>
            <person name="Masuho Y."/>
            <person name="Yamashita R."/>
            <person name="Nakai K."/>
            <person name="Yada T."/>
            <person name="Nakamura Y."/>
            <person name="Ohara O."/>
            <person name="Isogai T."/>
            <person name="Sugano S."/>
        </authorList>
    </citation>
    <scope>NUCLEOTIDE SEQUENCE [LARGE SCALE MRNA] (ISOFORM 1)</scope>
    <source>
        <tissue>Placenta</tissue>
    </source>
</reference>
<reference key="9">
    <citation type="journal article" date="2003" name="Science">
        <title>Human chromosome 7: DNA sequence and biology.</title>
        <authorList>
            <person name="Scherer S.W."/>
            <person name="Cheung J."/>
            <person name="MacDonald J.R."/>
            <person name="Osborne L.R."/>
            <person name="Nakabayashi K."/>
            <person name="Herbrick J.-A."/>
            <person name="Carson A.R."/>
            <person name="Parker-Katiraee L."/>
            <person name="Skaug J."/>
            <person name="Khaja R."/>
            <person name="Zhang J."/>
            <person name="Hudek A.K."/>
            <person name="Li M."/>
            <person name="Haddad M."/>
            <person name="Duggan G.E."/>
            <person name="Fernandez B.A."/>
            <person name="Kanematsu E."/>
            <person name="Gentles S."/>
            <person name="Christopoulos C.C."/>
            <person name="Choufani S."/>
            <person name="Kwasnicka D."/>
            <person name="Zheng X.H."/>
            <person name="Lai Z."/>
            <person name="Nusskern D.R."/>
            <person name="Zhang Q."/>
            <person name="Gu Z."/>
            <person name="Lu F."/>
            <person name="Zeesman S."/>
            <person name="Nowaczyk M.J."/>
            <person name="Teshima I."/>
            <person name="Chitayat D."/>
            <person name="Shuman C."/>
            <person name="Weksberg R."/>
            <person name="Zackai E.H."/>
            <person name="Grebe T.A."/>
            <person name="Cox S.R."/>
            <person name="Kirkpatrick S.J."/>
            <person name="Rahman N."/>
            <person name="Friedman J.M."/>
            <person name="Heng H.H.Q."/>
            <person name="Pelicci P.G."/>
            <person name="Lo-Coco F."/>
            <person name="Belloni E."/>
            <person name="Shaffer L.G."/>
            <person name="Pober B."/>
            <person name="Morton C.C."/>
            <person name="Gusella J.F."/>
            <person name="Bruns G.A.P."/>
            <person name="Korf B.R."/>
            <person name="Quade B.J."/>
            <person name="Ligon A.H."/>
            <person name="Ferguson H."/>
            <person name="Higgins A.W."/>
            <person name="Leach N.T."/>
            <person name="Herrick S.R."/>
            <person name="Lemyre E."/>
            <person name="Farra C.G."/>
            <person name="Kim H.-G."/>
            <person name="Summers A.M."/>
            <person name="Gripp K.W."/>
            <person name="Roberts W."/>
            <person name="Szatmari P."/>
            <person name="Winsor E.J.T."/>
            <person name="Grzeschik K.-H."/>
            <person name="Teebi A."/>
            <person name="Minassian B.A."/>
            <person name="Kere J."/>
            <person name="Armengol L."/>
            <person name="Pujana M.A."/>
            <person name="Estivill X."/>
            <person name="Wilson M.D."/>
            <person name="Koop B.F."/>
            <person name="Tosi S."/>
            <person name="Moore G.E."/>
            <person name="Boright A.P."/>
            <person name="Zlotorynski E."/>
            <person name="Kerem B."/>
            <person name="Kroisel P.M."/>
            <person name="Petek E."/>
            <person name="Oscier D.G."/>
            <person name="Mould S.J."/>
            <person name="Doehner H."/>
            <person name="Doehner K."/>
            <person name="Rommens J.M."/>
            <person name="Vincent J.B."/>
            <person name="Venter J.C."/>
            <person name="Li P.W."/>
            <person name="Mural R.J."/>
            <person name="Adams M.D."/>
            <person name="Tsui L.-C."/>
        </authorList>
    </citation>
    <scope>NUCLEOTIDE SEQUENCE [LARGE SCALE GENOMIC DNA] OF 41-765</scope>
</reference>
<reference key="10">
    <citation type="journal article" date="2001" name="Proc. Natl. Acad. Sci. U.S.A.">
        <title>Competitive regulation of CaT-like-mediated Ca2+ entry by protein kinase C and calmodulin.</title>
        <authorList>
            <person name="Niemeyer B.A."/>
            <person name="Bergs C."/>
            <person name="Wissenbach U."/>
            <person name="Flockerzi V."/>
            <person name="Trost C."/>
        </authorList>
    </citation>
    <scope>FUNCTION</scope>
    <scope>SUBCELLULAR LOCATION</scope>
    <scope>INTERACTION WITH CALMODULIN</scope>
    <scope>PHOSPHORYLATION AT THR-742</scope>
    <scope>MUTAGENESIS OF THR-742</scope>
    <scope>TRANSPORTER ACTIVITY</scope>
</reference>
<reference key="11">
    <citation type="journal article" date="2004" name="J. Biol. Chem.">
        <title>Ca2+ dependence of the Ca2+-selective TRPV6 channel.</title>
        <authorList>
            <person name="Bodding M."/>
            <person name="Flockerzi V."/>
        </authorList>
    </citation>
    <scope>FUNCTION</scope>
    <scope>SUBCELLULAR LOCATION</scope>
    <scope>MUTAGENESIS OF ASP-582</scope>
    <scope>CALMODULIN-BINDING REGION</scope>
    <scope>TRANSPORTER ACTIVITY</scope>
</reference>
<reference key="12">
    <citation type="journal article" date="2008" name="Proc. Natl. Acad. Sci. U.S.A.">
        <title>A quantitative atlas of mitotic phosphorylation.</title>
        <authorList>
            <person name="Dephoure N."/>
            <person name="Zhou C."/>
            <person name="Villen J."/>
            <person name="Beausoleil S.A."/>
            <person name="Bakalarski C.E."/>
            <person name="Elledge S.J."/>
            <person name="Gygi S.P."/>
        </authorList>
    </citation>
    <scope>IDENTIFICATION BY MASS SPECTROMETRY [LARGE SCALE ANALYSIS]</scope>
    <source>
        <tissue>Cervix carcinoma</tissue>
    </source>
</reference>
<reference key="13">
    <citation type="journal article" date="2013" name="J. Biol. Chem.">
        <title>The in vivo TRPV6 protein starts at a non-AUG triplet, decoded as methionine, upstream of canonical initiation at AUG.</title>
        <authorList>
            <person name="Fecher-Trost C."/>
            <person name="Wissenbach U."/>
            <person name="Beck A."/>
            <person name="Schalkowsky P."/>
            <person name="Stoerger C."/>
            <person name="Doerr J."/>
            <person name="Dembek A."/>
            <person name="Simon-Thomas M."/>
            <person name="Weber A."/>
            <person name="Wollenberg P."/>
            <person name="Ruppert T."/>
            <person name="Middendorff R."/>
            <person name="Maurer H.H."/>
            <person name="Flockerzi V."/>
        </authorList>
    </citation>
    <scope>IDENTIFICATION BY MASS SPECTROMETRY</scope>
    <scope>FUNCTION</scope>
    <scope>IDENTIFICATION OF NON-CANONICAL INITIATION CODON</scope>
    <scope>SUBCELLULAR LOCATION</scope>
    <scope>GLYCOSYLATION</scope>
    <scope>TISSUE SPECIFICITY</scope>
</reference>
<reference key="14">
    <citation type="journal article" date="2015" name="J. Cell Biol.">
        <title>TRP channel-associated factors are a novel protein family that regulates TRPM8 trafficking and activity.</title>
        <authorList>
            <person name="Gkika D."/>
            <person name="Lemonnier L."/>
            <person name="Shapovalov G."/>
            <person name="Gordienko D."/>
            <person name="Poux C."/>
            <person name="Bernardini M."/>
            <person name="Bokhobza A."/>
            <person name="Bidaux G."/>
            <person name="Degerny C."/>
            <person name="Verreman K."/>
            <person name="Guarmit B."/>
            <person name="Benahmed M."/>
            <person name="de Launoit Y."/>
            <person name="Bindels R.J."/>
            <person name="Fiorio Pla A."/>
            <person name="Prevarskaya N."/>
        </authorList>
    </citation>
    <scope>INTERACTION WITH TCAF1 AND TCAF2</scope>
</reference>
<reference evidence="20 21 22" key="15">
    <citation type="journal article" date="2018" name="Nature">
        <title>Opening of the human epithelial calcium channel TRPV6.</title>
        <authorList>
            <person name="McGoldrick L.L."/>
            <person name="Singh A.K."/>
            <person name="Saotome K."/>
            <person name="Yelshanskaya M.V."/>
            <person name="Twomey E.C."/>
            <person name="Grassucci R.A."/>
            <person name="Sobolevsky A.I."/>
        </authorList>
    </citation>
    <scope>STRUCTURE BY ELECTRON MICROSCOPY (3.60 ANGSTROMS) OF 41-765</scope>
    <scope>FUNCTION</scope>
    <scope>SUBCELLULAR LOCATION</scope>
    <scope>SUBUNIT</scope>
    <scope>TOPOLOGY</scope>
    <scope>MUTAGENESIS OF ARG-510; GLN-523 AND ALA-606</scope>
</reference>
<reference key="16">
    <citation type="journal article" date="2018" name="Am. J. Hum. Genet.">
        <title>TRPV6 Variants Interfere with Maternal-Fetal Calcium Transport through the Placenta and Cause Transient Neonatal Hyperparathyroidism.</title>
        <authorList>
            <person name="Suzuki Y."/>
            <person name="Chitayat D."/>
            <person name="Sawada H."/>
            <person name="Deardorff M.A."/>
            <person name="McLaughlin H.M."/>
            <person name="Begtrup A."/>
            <person name="Millar K."/>
            <person name="Harrington J."/>
            <person name="Chong K."/>
            <person name="Roifman M."/>
            <person name="Grand K."/>
            <person name="Tominaga M."/>
            <person name="Takada F."/>
            <person name="Shuster S."/>
            <person name="Obara M."/>
            <person name="Mutoh H."/>
            <person name="Kushima R."/>
            <person name="Nishimura G."/>
        </authorList>
    </citation>
    <scope>VARIANTS HRPTTN SER-18; TYR-212; THR-223; GLN-425; ARG-428; GLU-451 AND TRP-483</scope>
    <scope>CHARACTERIZATION OF VARIANTS HRPTTN SER-18; TYR-212; THR-223; GLN-425; GLU-451; ARG-428 AND TRP-483</scope>
    <scope>INVOLVEMENT IN HRPTTN</scope>
    <scope>FUNCTION</scope>
    <scope>SUBCELLULAR LOCATION</scope>
</reference>
<reference key="17">
    <citation type="journal article" date="2019" name="J. Endocr. Soc.">
        <title>TRPV6 gene mutation in a dizygous twin with transient neonatal hyperparathyroidism.</title>
        <authorList>
            <person name="Yamashita S."/>
            <person name="Mizumoto H."/>
            <person name="Sawada H."/>
            <person name="Suzuki Y."/>
            <person name="Hata D."/>
        </authorList>
    </citation>
    <scope>VARIANTS HRPTTN THR-223 AND ARG-428</scope>
</reference>
<dbReference type="EMBL" id="AF304463">
    <property type="protein sequence ID" value="AAG41951.1"/>
    <property type="molecule type" value="mRNA"/>
</dbReference>
<dbReference type="EMBL" id="AF365927">
    <property type="protein sequence ID" value="AAL40230.1"/>
    <property type="status" value="ALT_SEQ"/>
    <property type="molecule type" value="mRNA"/>
</dbReference>
<dbReference type="EMBL" id="AF365928">
    <property type="protein sequence ID" value="AAM00356.1"/>
    <property type="status" value="ALT_SEQ"/>
    <property type="molecule type" value="mRNA"/>
</dbReference>
<dbReference type="EMBL" id="AH010730">
    <property type="protein sequence ID" value="AAK50426.1"/>
    <property type="status" value="ALT_SEQ"/>
    <property type="molecule type" value="Genomic_DNA"/>
</dbReference>
<dbReference type="EMBL" id="AJ243500">
    <property type="protein sequence ID" value="CAC20416.2"/>
    <property type="status" value="ALT_SEQ"/>
    <property type="molecule type" value="mRNA"/>
</dbReference>
<dbReference type="EMBL" id="AJ243501">
    <property type="protein sequence ID" value="CAC20417.2"/>
    <property type="status" value="ALT_SEQ"/>
    <property type="molecule type" value="mRNA"/>
</dbReference>
<dbReference type="EMBL" id="AJ487964">
    <property type="protein sequence ID" value="CAD32311.1"/>
    <property type="status" value="ALT_SEQ"/>
    <property type="molecule type" value="mRNA"/>
</dbReference>
<dbReference type="EMBL" id="AY225461">
    <property type="protein sequence ID" value="AAO38052.1"/>
    <property type="status" value="ALT_SEQ"/>
    <property type="molecule type" value="Genomic_DNA"/>
</dbReference>
<dbReference type="EMBL" id="AK291707">
    <property type="protein sequence ID" value="BAF84396.1"/>
    <property type="status" value="ALT_SEQ"/>
    <property type="molecule type" value="mRNA"/>
</dbReference>
<dbReference type="EMBL" id="CH236959">
    <property type="protein sequence ID" value="EAL23776.1"/>
    <property type="molecule type" value="Genomic_DNA"/>
</dbReference>
<dbReference type="CCDS" id="CCDS5874.2">
    <molecule id="Q9H1D0-1"/>
</dbReference>
<dbReference type="PIR" id="JC7531">
    <property type="entry name" value="JC7531"/>
</dbReference>
<dbReference type="RefSeq" id="NP_061116.5">
    <molecule id="Q9H1D0-1"/>
    <property type="nucleotide sequence ID" value="NM_018646.5"/>
</dbReference>
<dbReference type="PDB" id="6BO8">
    <property type="method" value="EM"/>
    <property type="resolution" value="3.60 A"/>
    <property type="chains" value="A/B/C/D=41-765"/>
</dbReference>
<dbReference type="PDB" id="6BO9">
    <property type="method" value="EM"/>
    <property type="resolution" value="4.00 A"/>
    <property type="chains" value="A/B/C/D=41-765"/>
</dbReference>
<dbReference type="PDB" id="6BOA">
    <property type="method" value="EM"/>
    <property type="resolution" value="4.20 A"/>
    <property type="chains" value="A/B/C/D=41-765"/>
</dbReference>
<dbReference type="PDB" id="6D7S">
    <property type="method" value="EM"/>
    <property type="resolution" value="4.34 A"/>
    <property type="chains" value="A/B/C/D=41-765"/>
</dbReference>
<dbReference type="PDB" id="6D7T">
    <property type="method" value="EM"/>
    <property type="resolution" value="4.44 A"/>
    <property type="chains" value="A/B/C/D=41-765"/>
</dbReference>
<dbReference type="PDB" id="6E2F">
    <property type="method" value="EM"/>
    <property type="resolution" value="3.90 A"/>
    <property type="chains" value="A/B/C/D=41-765"/>
</dbReference>
<dbReference type="PDB" id="7K4A">
    <property type="method" value="EM"/>
    <property type="resolution" value="3.26 A"/>
    <property type="chains" value="A/B/C/D=41-707"/>
</dbReference>
<dbReference type="PDB" id="7K4B">
    <property type="method" value="EM"/>
    <property type="resolution" value="3.10 A"/>
    <property type="chains" value="A/B/C/D=41-707"/>
</dbReference>
<dbReference type="PDB" id="7K4C">
    <property type="method" value="EM"/>
    <property type="resolution" value="3.78 A"/>
    <property type="chains" value="A/B/C/D=41-707"/>
</dbReference>
<dbReference type="PDB" id="7K4D">
    <property type="method" value="EM"/>
    <property type="resolution" value="3.66 A"/>
    <property type="chains" value="A/B/C/D=41-707"/>
</dbReference>
<dbReference type="PDB" id="7K4E">
    <property type="method" value="EM"/>
    <property type="resolution" value="4.34 A"/>
    <property type="chains" value="A/B/C/D=41-707"/>
</dbReference>
<dbReference type="PDB" id="7K4F">
    <property type="method" value="EM"/>
    <property type="resolution" value="3.75 A"/>
    <property type="chains" value="A/B/C/D=41-707"/>
</dbReference>
<dbReference type="PDB" id="7S88">
    <property type="method" value="EM"/>
    <property type="resolution" value="2.69 A"/>
    <property type="chains" value="A/B/C/D=41-707"/>
</dbReference>
<dbReference type="PDB" id="7S89">
    <property type="method" value="EM"/>
    <property type="resolution" value="2.54 A"/>
    <property type="chains" value="A/B/C/D=41-707"/>
</dbReference>
<dbReference type="PDB" id="7S8B">
    <property type="method" value="EM"/>
    <property type="resolution" value="2.43 A"/>
    <property type="chains" value="A/B/C/D=41-707"/>
</dbReference>
<dbReference type="PDB" id="7S8C">
    <property type="method" value="EM"/>
    <property type="resolution" value="2.85 A"/>
    <property type="chains" value="A/B/C/D=41-707"/>
</dbReference>
<dbReference type="PDB" id="8FOA">
    <property type="method" value="EM"/>
    <property type="resolution" value="2.66 A"/>
    <property type="chains" value="A/B/C/D=41-765"/>
</dbReference>
<dbReference type="PDB" id="8FOB">
    <property type="method" value="EM"/>
    <property type="resolution" value="2.71 A"/>
    <property type="chains" value="A/B/C/D=41-765"/>
</dbReference>
<dbReference type="PDB" id="8SP8">
    <property type="method" value="EM"/>
    <property type="resolution" value="2.79 A"/>
    <property type="chains" value="A/B/C/D=41-706"/>
</dbReference>
<dbReference type="PDB" id="9CUH">
    <property type="method" value="EM"/>
    <property type="resolution" value="3.03 A"/>
    <property type="chains" value="A/B/C/D=1-765"/>
</dbReference>
<dbReference type="PDB" id="9CUI">
    <property type="method" value="EM"/>
    <property type="resolution" value="3.42 A"/>
    <property type="chains" value="A/B/C/D=1-765"/>
</dbReference>
<dbReference type="PDB" id="9CUJ">
    <property type="method" value="EM"/>
    <property type="resolution" value="2.78 A"/>
    <property type="chains" value="A/B/C/D=1-765"/>
</dbReference>
<dbReference type="PDB" id="9CUK">
    <property type="method" value="EM"/>
    <property type="resolution" value="3.26 A"/>
    <property type="chains" value="A/B/C/D=1-765"/>
</dbReference>
<dbReference type="PDBsum" id="6BO8"/>
<dbReference type="PDBsum" id="6BO9"/>
<dbReference type="PDBsum" id="6BOA"/>
<dbReference type="PDBsum" id="6D7S"/>
<dbReference type="PDBsum" id="6D7T"/>
<dbReference type="PDBsum" id="6E2F"/>
<dbReference type="PDBsum" id="7K4A"/>
<dbReference type="PDBsum" id="7K4B"/>
<dbReference type="PDBsum" id="7K4C"/>
<dbReference type="PDBsum" id="7K4D"/>
<dbReference type="PDBsum" id="7K4E"/>
<dbReference type="PDBsum" id="7K4F"/>
<dbReference type="PDBsum" id="7S88"/>
<dbReference type="PDBsum" id="7S89"/>
<dbReference type="PDBsum" id="7S8B"/>
<dbReference type="PDBsum" id="7S8C"/>
<dbReference type="PDBsum" id="8FOA"/>
<dbReference type="PDBsum" id="8FOB"/>
<dbReference type="PDBsum" id="8SP8"/>
<dbReference type="PDBsum" id="9CUH"/>
<dbReference type="PDBsum" id="9CUI"/>
<dbReference type="PDBsum" id="9CUJ"/>
<dbReference type="PDBsum" id="9CUK"/>
<dbReference type="EMDB" id="EMD-22662"/>
<dbReference type="EMDB" id="EMD-22663"/>
<dbReference type="EMDB" id="EMD-22664"/>
<dbReference type="EMDB" id="EMD-22665"/>
<dbReference type="EMDB" id="EMD-22666"/>
<dbReference type="EMDB" id="EMD-22667"/>
<dbReference type="EMDB" id="EMD-24890"/>
<dbReference type="EMDB" id="EMD-24891"/>
<dbReference type="EMDB" id="EMD-24892"/>
<dbReference type="EMDB" id="EMD-24893"/>
<dbReference type="EMDB" id="EMD-29343"/>
<dbReference type="EMDB" id="EMD-29344"/>
<dbReference type="EMDB" id="EMD-40676"/>
<dbReference type="EMDB" id="EMD-45933"/>
<dbReference type="EMDB" id="EMD-45934"/>
<dbReference type="EMDB" id="EMD-45935"/>
<dbReference type="EMDB" id="EMD-45936"/>
<dbReference type="EMDB" id="EMD-7120"/>
<dbReference type="EMDB" id="EMD-7121"/>
<dbReference type="EMDB" id="EMD-7122"/>
<dbReference type="EMDB" id="EMD-7824"/>
<dbReference type="EMDB" id="EMD-7825"/>
<dbReference type="EMDB" id="EMD-8961"/>
<dbReference type="SMR" id="Q9H1D0"/>
<dbReference type="BioGRID" id="120683">
    <property type="interactions" value="17"/>
</dbReference>
<dbReference type="FunCoup" id="Q9H1D0">
    <property type="interactions" value="382"/>
</dbReference>
<dbReference type="IntAct" id="Q9H1D0">
    <property type="interactions" value="4"/>
</dbReference>
<dbReference type="MINT" id="Q9H1D0"/>
<dbReference type="STRING" id="9606.ENSP00000352358"/>
<dbReference type="BindingDB" id="Q9H1D0"/>
<dbReference type="ChEMBL" id="CHEMBL1628465"/>
<dbReference type="DrugBank" id="DB11093">
    <property type="generic name" value="Calcium citrate"/>
</dbReference>
<dbReference type="DrugBank" id="DB11348">
    <property type="generic name" value="Calcium Phosphate"/>
</dbReference>
<dbReference type="DrugBank" id="DB14481">
    <property type="generic name" value="Calcium phosphate dihydrate"/>
</dbReference>
<dbReference type="DrugBank" id="DB15366">
    <property type="generic name" value="SOR-C13"/>
</dbReference>
<dbReference type="GuidetoPHARMACOLOGY" id="512"/>
<dbReference type="TCDB" id="1.A.4.2.11">
    <property type="family name" value="the transient receptor potential ca2+/cation channel (trp-cc) family"/>
</dbReference>
<dbReference type="GlyCosmos" id="Q9H1D0">
    <property type="glycosylation" value="1 site, No reported glycans"/>
</dbReference>
<dbReference type="GlyGen" id="Q9H1D0">
    <property type="glycosylation" value="4 sites, 1 O-linked glycan (3 sites)"/>
</dbReference>
<dbReference type="iPTMnet" id="Q9H1D0"/>
<dbReference type="PhosphoSitePlus" id="Q9H1D0"/>
<dbReference type="BioMuta" id="TRPV6"/>
<dbReference type="DMDM" id="62901469"/>
<dbReference type="MassIVE" id="Q9H1D0"/>
<dbReference type="PaxDb" id="9606-ENSP00000352358"/>
<dbReference type="PeptideAtlas" id="Q9H1D0"/>
<dbReference type="ProteomicsDB" id="80400">
    <molecule id="Q9H1D0-1"/>
</dbReference>
<dbReference type="ProteomicsDB" id="80401">
    <molecule id="Q9H1D0-2"/>
</dbReference>
<dbReference type="Antibodypedia" id="32586">
    <property type="antibodies" value="213 antibodies from 33 providers"/>
</dbReference>
<dbReference type="DNASU" id="55503"/>
<dbReference type="Ensembl" id="ENST00000359396.9">
    <molecule id="Q9H1D0-1"/>
    <property type="protein sequence ID" value="ENSP00000352358.5"/>
    <property type="gene ID" value="ENSG00000165125.22"/>
</dbReference>
<dbReference type="GeneID" id="55503"/>
<dbReference type="KEGG" id="hsa:55503"/>
<dbReference type="MANE-Select" id="ENST00000359396.9">
    <property type="protein sequence ID" value="ENSP00000352358.5"/>
    <property type="RefSeq nucleotide sequence ID" value="NM_018646.6"/>
    <property type="RefSeq protein sequence ID" value="NP_061116.5"/>
</dbReference>
<dbReference type="UCSC" id="uc003wbx.4">
    <molecule id="Q9H1D0-1"/>
    <property type="organism name" value="human"/>
</dbReference>
<dbReference type="AGR" id="HGNC:14006"/>
<dbReference type="CTD" id="55503"/>
<dbReference type="DisGeNET" id="55503"/>
<dbReference type="GeneCards" id="TRPV6"/>
<dbReference type="GeneReviews" id="TRPV6"/>
<dbReference type="HGNC" id="HGNC:14006">
    <property type="gene designation" value="TRPV6"/>
</dbReference>
<dbReference type="HPA" id="ENSG00000165125">
    <property type="expression patterns" value="Tissue enhanced (pancreas, prostate, salivary gland)"/>
</dbReference>
<dbReference type="MalaCards" id="TRPV6"/>
<dbReference type="MIM" id="606680">
    <property type="type" value="gene"/>
</dbReference>
<dbReference type="MIM" id="618188">
    <property type="type" value="phenotype"/>
</dbReference>
<dbReference type="neXtProt" id="NX_Q9H1D0"/>
<dbReference type="OpenTargets" id="ENSG00000165125"/>
<dbReference type="Orphanet" id="676">
    <property type="disease" value="Hereditary chronic pancreatitis"/>
</dbReference>
<dbReference type="Orphanet" id="417">
    <property type="disease" value="Neonatal severe primary hyperparathyroidism"/>
</dbReference>
<dbReference type="PharmGKB" id="PA37832"/>
<dbReference type="VEuPathDB" id="HostDB:ENSG00000165125"/>
<dbReference type="eggNOG" id="KOG3676">
    <property type="taxonomic scope" value="Eukaryota"/>
</dbReference>
<dbReference type="GeneTree" id="ENSGT00940000156687"/>
<dbReference type="HOGENOM" id="CLU_012795_2_0_1"/>
<dbReference type="InParanoid" id="Q9H1D0"/>
<dbReference type="OMA" id="LCLWNKF"/>
<dbReference type="OrthoDB" id="533508at2759"/>
<dbReference type="PAN-GO" id="Q9H1D0">
    <property type="GO annotations" value="3 GO annotations based on evolutionary models"/>
</dbReference>
<dbReference type="TreeFam" id="TF314711"/>
<dbReference type="PathwayCommons" id="Q9H1D0"/>
<dbReference type="Reactome" id="R-HSA-3295583">
    <property type="pathway name" value="TRP channels"/>
</dbReference>
<dbReference type="SignaLink" id="Q9H1D0"/>
<dbReference type="SIGNOR" id="Q9H1D0"/>
<dbReference type="BioGRID-ORCS" id="55503">
    <property type="hits" value="8 hits in 1149 CRISPR screens"/>
</dbReference>
<dbReference type="ChiTaRS" id="TRPV6">
    <property type="organism name" value="human"/>
</dbReference>
<dbReference type="GeneWiki" id="TRPV6"/>
<dbReference type="GenomeRNAi" id="55503"/>
<dbReference type="Pharos" id="Q9H1D0">
    <property type="development level" value="Tchem"/>
</dbReference>
<dbReference type="PRO" id="PR:Q9H1D0"/>
<dbReference type="Proteomes" id="UP000005640">
    <property type="component" value="Chromosome 7"/>
</dbReference>
<dbReference type="RNAct" id="Q9H1D0">
    <property type="molecule type" value="protein"/>
</dbReference>
<dbReference type="Bgee" id="ENSG00000165125">
    <property type="expression patterns" value="Expressed in body of pancreas and 94 other cell types or tissues"/>
</dbReference>
<dbReference type="ExpressionAtlas" id="Q9H1D0">
    <property type="expression patterns" value="baseline and differential"/>
</dbReference>
<dbReference type="GO" id="GO:0034704">
    <property type="term" value="C:calcium channel complex"/>
    <property type="evidence" value="ECO:0007669"/>
    <property type="project" value="Ensembl"/>
</dbReference>
<dbReference type="GO" id="GO:0005886">
    <property type="term" value="C:plasma membrane"/>
    <property type="evidence" value="ECO:0000314"/>
    <property type="project" value="UniProtKB"/>
</dbReference>
<dbReference type="GO" id="GO:0005262">
    <property type="term" value="F:calcium channel activity"/>
    <property type="evidence" value="ECO:0000314"/>
    <property type="project" value="UniProtKB"/>
</dbReference>
<dbReference type="GO" id="GO:0005516">
    <property type="term" value="F:calmodulin binding"/>
    <property type="evidence" value="ECO:0000314"/>
    <property type="project" value="UniProtKB"/>
</dbReference>
<dbReference type="GO" id="GO:0042802">
    <property type="term" value="F:identical protein binding"/>
    <property type="evidence" value="ECO:0007669"/>
    <property type="project" value="Ensembl"/>
</dbReference>
<dbReference type="GO" id="GO:0046872">
    <property type="term" value="F:metal ion binding"/>
    <property type="evidence" value="ECO:0007669"/>
    <property type="project" value="UniProtKB-KW"/>
</dbReference>
<dbReference type="GO" id="GO:0055074">
    <property type="term" value="P:calcium ion homeostasis"/>
    <property type="evidence" value="ECO:0000250"/>
    <property type="project" value="UniProtKB"/>
</dbReference>
<dbReference type="GO" id="GO:0098703">
    <property type="term" value="P:calcium ion import across plasma membrane"/>
    <property type="evidence" value="ECO:0000314"/>
    <property type="project" value="UniProtKB"/>
</dbReference>
<dbReference type="GO" id="GO:0070588">
    <property type="term" value="P:calcium ion transmembrane transport"/>
    <property type="evidence" value="ECO:0000314"/>
    <property type="project" value="UniProtKB"/>
</dbReference>
<dbReference type="GO" id="GO:0006816">
    <property type="term" value="P:calcium ion transport"/>
    <property type="evidence" value="ECO:0000314"/>
    <property type="project" value="UniProtKB"/>
</dbReference>
<dbReference type="GO" id="GO:0035898">
    <property type="term" value="P:parathyroid hormone secretion"/>
    <property type="evidence" value="ECO:0007669"/>
    <property type="project" value="Ensembl"/>
</dbReference>
<dbReference type="GO" id="GO:0017158">
    <property type="term" value="P:regulation of calcium ion-dependent exocytosis"/>
    <property type="evidence" value="ECO:0000303"/>
    <property type="project" value="UniProtKB"/>
</dbReference>
<dbReference type="GO" id="GO:0051592">
    <property type="term" value="P:response to calcium ion"/>
    <property type="evidence" value="ECO:0000250"/>
    <property type="project" value="UniProtKB"/>
</dbReference>
<dbReference type="CDD" id="cd22192">
    <property type="entry name" value="TRPV5-6"/>
    <property type="match status" value="1"/>
</dbReference>
<dbReference type="DisProt" id="DP01767"/>
<dbReference type="FunFam" id="1.25.40.20:FF:000143">
    <property type="entry name" value="transient receptor potential cation channel subfamily V member 5"/>
    <property type="match status" value="1"/>
</dbReference>
<dbReference type="FunFam" id="1.25.40.20:FF:000230">
    <property type="entry name" value="transient receptor potential cation channel subfamily V member 6"/>
    <property type="match status" value="1"/>
</dbReference>
<dbReference type="Gene3D" id="1.25.40.20">
    <property type="entry name" value="Ankyrin repeat-containing domain"/>
    <property type="match status" value="1"/>
</dbReference>
<dbReference type="InterPro" id="IPR002110">
    <property type="entry name" value="Ankyrin_rpt"/>
</dbReference>
<dbReference type="InterPro" id="IPR036770">
    <property type="entry name" value="Ankyrin_rpt-contain_sf"/>
</dbReference>
<dbReference type="InterPro" id="IPR005821">
    <property type="entry name" value="Ion_trans_dom"/>
</dbReference>
<dbReference type="InterPro" id="IPR024862">
    <property type="entry name" value="TRPV"/>
</dbReference>
<dbReference type="InterPro" id="IPR008344">
    <property type="entry name" value="TRPV5/TRPV6"/>
</dbReference>
<dbReference type="InterPro" id="IPR008345">
    <property type="entry name" value="TrpV6"/>
</dbReference>
<dbReference type="NCBIfam" id="TIGR00870">
    <property type="entry name" value="trp"/>
    <property type="match status" value="1"/>
</dbReference>
<dbReference type="PANTHER" id="PTHR10582:SF25">
    <property type="entry name" value="TRANSIENT RECEPTOR POTENTIAL CATION CHANNEL SUBFAMILY V MEMBER 6"/>
    <property type="match status" value="1"/>
</dbReference>
<dbReference type="PANTHER" id="PTHR10582">
    <property type="entry name" value="TRANSIENT RECEPTOR POTENTIAL ION CHANNEL PROTEIN"/>
    <property type="match status" value="1"/>
</dbReference>
<dbReference type="Pfam" id="PF00023">
    <property type="entry name" value="Ank"/>
    <property type="match status" value="1"/>
</dbReference>
<dbReference type="Pfam" id="PF12796">
    <property type="entry name" value="Ank_2"/>
    <property type="match status" value="1"/>
</dbReference>
<dbReference type="Pfam" id="PF00520">
    <property type="entry name" value="Ion_trans"/>
    <property type="match status" value="1"/>
</dbReference>
<dbReference type="PRINTS" id="PR01415">
    <property type="entry name" value="ANKYRIN"/>
</dbReference>
<dbReference type="PRINTS" id="PR01765">
    <property type="entry name" value="ECACCHANNEL"/>
</dbReference>
<dbReference type="PRINTS" id="PR01766">
    <property type="entry name" value="ECACCHANNEL1"/>
</dbReference>
<dbReference type="SMART" id="SM00248">
    <property type="entry name" value="ANK"/>
    <property type="match status" value="5"/>
</dbReference>
<dbReference type="SUPFAM" id="SSF48403">
    <property type="entry name" value="Ankyrin repeat"/>
    <property type="match status" value="1"/>
</dbReference>
<dbReference type="PROSITE" id="PS50297">
    <property type="entry name" value="ANK_REP_REGION"/>
    <property type="match status" value="1"/>
</dbReference>
<dbReference type="PROSITE" id="PS50088">
    <property type="entry name" value="ANK_REPEAT"/>
    <property type="match status" value="2"/>
</dbReference>
<proteinExistence type="evidence at protein level"/>
<evidence type="ECO:0000250" key="1">
    <source>
        <dbReference type="UniProtKB" id="Q91WD2"/>
    </source>
</evidence>
<evidence type="ECO:0000250" key="2">
    <source>
        <dbReference type="UniProtKB" id="Q9R186"/>
    </source>
</evidence>
<evidence type="ECO:0000255" key="3"/>
<evidence type="ECO:0000269" key="4">
    <source>
    </source>
</evidence>
<evidence type="ECO:0000269" key="5">
    <source>
    </source>
</evidence>
<evidence type="ECO:0000269" key="6">
    <source>
    </source>
</evidence>
<evidence type="ECO:0000269" key="7">
    <source>
    </source>
</evidence>
<evidence type="ECO:0000269" key="8">
    <source>
    </source>
</evidence>
<evidence type="ECO:0000269" key="9">
    <source>
    </source>
</evidence>
<evidence type="ECO:0000269" key="10">
    <source>
    </source>
</evidence>
<evidence type="ECO:0000269" key="11">
    <source>
    </source>
</evidence>
<evidence type="ECO:0000269" key="12">
    <source>
    </source>
</evidence>
<evidence type="ECO:0000269" key="13">
    <source ref="7"/>
</evidence>
<evidence type="ECO:0000303" key="14">
    <source>
    </source>
</evidence>
<evidence type="ECO:0000303" key="15">
    <source>
    </source>
</evidence>
<evidence type="ECO:0000303" key="16">
    <source ref="5"/>
</evidence>
<evidence type="ECO:0000305" key="17"/>
<evidence type="ECO:0000305" key="18">
    <source>
    </source>
</evidence>
<evidence type="ECO:0000305" key="19">
    <source>
    </source>
</evidence>
<evidence type="ECO:0007744" key="20">
    <source>
        <dbReference type="PDB" id="6BO8"/>
    </source>
</evidence>
<evidence type="ECO:0007744" key="21">
    <source>
        <dbReference type="PDB" id="6BO9"/>
    </source>
</evidence>
<evidence type="ECO:0007744" key="22">
    <source>
        <dbReference type="PDB" id="6BOA"/>
    </source>
</evidence>
<evidence type="ECO:0007829" key="23">
    <source>
        <dbReference type="PDB" id="7K4A"/>
    </source>
</evidence>
<evidence type="ECO:0007829" key="24">
    <source>
        <dbReference type="PDB" id="7K4B"/>
    </source>
</evidence>
<evidence type="ECO:0007829" key="25">
    <source>
        <dbReference type="PDB" id="7S88"/>
    </source>
</evidence>
<evidence type="ECO:0007829" key="26">
    <source>
        <dbReference type="PDB" id="7S89"/>
    </source>
</evidence>
<evidence type="ECO:0007829" key="27">
    <source>
        <dbReference type="PDB" id="7S8B"/>
    </source>
</evidence>
<evidence type="ECO:0007829" key="28">
    <source>
        <dbReference type="PDB" id="8FOA"/>
    </source>
</evidence>
<evidence type="ECO:0007829" key="29">
    <source>
        <dbReference type="PDB" id="8FOB"/>
    </source>
</evidence>
<evidence type="ECO:0007829" key="30">
    <source>
        <dbReference type="PDB" id="9CUI"/>
    </source>
</evidence>
<evidence type="ECO:0007829" key="31">
    <source>
        <dbReference type="PDB" id="9CUJ"/>
    </source>
</evidence>
<evidence type="ECO:0007829" key="32">
    <source>
        <dbReference type="PDB" id="9CUK"/>
    </source>
</evidence>
<sequence length="765" mass="87286">MGPLQGDGGPALGGADVAPRLSPVRVWPRPQAPKEPALHPMGLSLPKEKGLILCLWSKFCRWFQRRESWAQSRDEQNLLQQKRIWESPLLLAAKDNDVQALNKLLKYEDCKVHQRGAMGETALHIAALYDNLEAAMVLMEAAPELVFEPMTSELYEGQTALHIAVVNQNMNLVRALLARRASVSARATGTAFRRSPCNLIYFGEHPLSFAACVNSEEIVRLLIEHGADIRAQDSLGNTVLHILILQPNKTFACQMYNLLLSYDRHGDHLQPLDLVPNHQGLTPFKLAGVEGNTVMFQHLMQKRKHTQWTYGPLTSTLYDLTEIDSSGDEQSLLELIITTKKREARQILDQTPVKELVSLKWKRYGRPYFCMLGAIYLLYIICFTMCCIYRPLKPRTNNRTSPRDNTLLQQKLLQEAYMTPKDDIRLVGELVTVIGAIIILLVEVPDIFRMGVTRFFGQTILGGPFHVLIITYAFMVLVTMVMRLISASGEVVPMSFALVLGWCNVMYFARGFQMLGPFTIMIQKMIFGDLMRFCWLMAVVILGFASAFYIIFQTEDPEELGHFYDYPMALFSTFELFLTIIDGPANYNVDLPFMYSITYAAFAIIATLLMLNLLIAMMGDTHWRVAHERDELWRAQIVATTVMLERKLPRCLWPRSGICGREYGLGDRWFLRVEDRQDLNRQRIQRYAQAFHTRGSEDLDKDSVEKLELGCPFSPHLSLPMPSVSRSTSRSSANWERLRQGTLRRDLRGIINRGLEDGESWEYQI</sequence>
<protein>
    <recommendedName>
        <fullName>Transient receptor potential cation channel subfamily V member 6</fullName>
        <shortName>TrpV6</shortName>
    </recommendedName>
    <alternativeName>
        <fullName evidence="15">CaT-like</fullName>
        <shortName evidence="15">CaT-L</shortName>
    </alternativeName>
    <alternativeName>
        <fullName evidence="14">Calcium transport protein 1</fullName>
        <shortName evidence="14">CaT1</shortName>
    </alternativeName>
    <alternativeName>
        <fullName>Epithelial calcium channel 2</fullName>
        <shortName>ECaC2</shortName>
    </alternativeName>
</protein>
<keyword id="KW-0002">3D-structure</keyword>
<keyword id="KW-0025">Alternative splicing</keyword>
<keyword id="KW-0040">ANK repeat</keyword>
<keyword id="KW-0106">Calcium</keyword>
<keyword id="KW-0107">Calcium channel</keyword>
<keyword id="KW-0109">Calcium transport</keyword>
<keyword id="KW-0112">Calmodulin-binding</keyword>
<keyword id="KW-1003">Cell membrane</keyword>
<keyword id="KW-0225">Disease variant</keyword>
<keyword id="KW-0325">Glycoprotein</keyword>
<keyword id="KW-0407">Ion channel</keyword>
<keyword id="KW-0406">Ion transport</keyword>
<keyword id="KW-0472">Membrane</keyword>
<keyword id="KW-0479">Metal-binding</keyword>
<keyword id="KW-0597">Phosphoprotein</keyword>
<keyword id="KW-1267">Proteomics identification</keyword>
<keyword id="KW-1185">Reference proteome</keyword>
<keyword id="KW-0677">Repeat</keyword>
<keyword id="KW-0812">Transmembrane</keyword>
<keyword id="KW-1133">Transmembrane helix</keyword>
<keyword id="KW-0813">Transport</keyword>
<feature type="chain" id="PRO_0000215354" description="Transient receptor potential cation channel subfamily V member 6">
    <location>
        <begin position="1"/>
        <end position="765"/>
    </location>
</feature>
<feature type="topological domain" description="Cytoplasmic" evidence="19">
    <location>
        <begin position="1"/>
        <end position="367"/>
    </location>
</feature>
<feature type="transmembrane region" description="Helical" evidence="19">
    <location>
        <begin position="368"/>
        <end position="388"/>
    </location>
</feature>
<feature type="topological domain" description="Extracellular" evidence="19">
    <location>
        <begin position="389"/>
        <end position="425"/>
    </location>
</feature>
<feature type="transmembrane region" description="Helical" evidence="19">
    <location>
        <begin position="426"/>
        <end position="448"/>
    </location>
</feature>
<feature type="topological domain" description="Cytoplasmic" evidence="19">
    <location>
        <begin position="449"/>
        <end position="463"/>
    </location>
</feature>
<feature type="transmembrane region" description="Helical" evidence="19">
    <location>
        <begin position="464"/>
        <end position="483"/>
    </location>
</feature>
<feature type="topological domain" description="Extracellular" evidence="19">
    <location>
        <begin position="484"/>
        <end position="489"/>
    </location>
</feature>
<feature type="transmembrane region" description="Helical" evidence="19">
    <location>
        <begin position="490"/>
        <end position="509"/>
    </location>
</feature>
<feature type="topological domain" description="Cytoplasmic" evidence="19">
    <location>
        <begin position="510"/>
        <end position="529"/>
    </location>
</feature>
<feature type="transmembrane region" description="Helical" evidence="19">
    <location>
        <begin position="530"/>
        <end position="552"/>
    </location>
</feature>
<feature type="topological domain" description="Extracellular" evidence="19">
    <location>
        <begin position="553"/>
        <end position="565"/>
    </location>
</feature>
<feature type="intramembrane region" description="Pore-forming" evidence="19">
    <location>
        <begin position="566"/>
        <end position="585"/>
    </location>
</feature>
<feature type="topological domain" description="Extracellular" evidence="19">
    <location>
        <begin position="586"/>
        <end position="596"/>
    </location>
</feature>
<feature type="transmembrane region" description="Helical" evidence="19">
    <location>
        <begin position="597"/>
        <end position="617"/>
    </location>
</feature>
<feature type="topological domain" description="Cytoplasmic" evidence="19">
    <location>
        <begin position="618"/>
        <end position="765"/>
    </location>
</feature>
<feature type="repeat" description="ANK 1" evidence="3">
    <location>
        <begin position="84"/>
        <end position="114"/>
    </location>
</feature>
<feature type="repeat" description="ANK 2" evidence="3">
    <location>
        <begin position="118"/>
        <end position="147"/>
    </location>
</feature>
<feature type="repeat" description="ANK 3" evidence="3">
    <location>
        <begin position="156"/>
        <end position="185"/>
    </location>
</feature>
<feature type="repeat" description="ANK 4" evidence="3">
    <location>
        <begin position="202"/>
        <end position="231"/>
    </location>
</feature>
<feature type="repeat" description="ANK 5" evidence="3">
    <location>
        <begin position="235"/>
        <end position="277"/>
    </location>
</feature>
<feature type="repeat" description="ANK 6" evidence="3">
    <location>
        <begin position="279"/>
        <end position="308"/>
    </location>
</feature>
<feature type="region of interest" description="Interaction with calmodulin" evidence="1">
    <location>
        <begin position="133"/>
        <end position="143"/>
    </location>
</feature>
<feature type="region of interest" description="Interaction with S100A10" evidence="1">
    <location>
        <begin position="638"/>
        <end position="642"/>
    </location>
</feature>
<feature type="region of interest" description="Interaction with calmodulin" evidence="5 7">
    <location>
        <begin position="731"/>
        <end position="751"/>
    </location>
</feature>
<feature type="short sequence motif" description="Selectivity filter" evidence="19">
    <location>
        <begin position="581"/>
        <end position="585"/>
    </location>
</feature>
<feature type="binding site" evidence="19">
    <location>
        <position position="582"/>
    </location>
    <ligand>
        <name>Ca(2+)</name>
        <dbReference type="ChEBI" id="CHEBI:29108"/>
        <note>ligand shared between two neighboring subunits</note>
    </ligand>
</feature>
<feature type="modified residue" description="Phosphotyrosine; by SRC" evidence="2">
    <location>
        <position position="201"/>
    </location>
</feature>
<feature type="modified residue" description="Phosphothreonine; by PKC/PRKCA" evidence="5">
    <location>
        <position position="742"/>
    </location>
</feature>
<feature type="glycosylation site" description="N-linked (GlcNAc...) asparagine" evidence="3">
    <location>
        <position position="398"/>
    </location>
</feature>
<feature type="splice variant" id="VSP_013439" description="In isoform 2." evidence="16">
    <location>
        <begin position="65"/>
        <end position="232"/>
    </location>
</feature>
<feature type="sequence variant" id="VAR_081865" description="In HRPTTN; likely benign; no effect on localization at the plasma membrane; no change in calcium ion import across plasma membrane; dbSNP:rs17881456." evidence="11">
    <original>A</original>
    <variation>S</variation>
    <location>
        <position position="18"/>
    </location>
</feature>
<feature type="sequence variant" id="VAR_022251" description="In dbSNP:rs4987657." evidence="6 13">
    <original>C</original>
    <variation>R</variation>
    <location>
        <position position="197"/>
    </location>
</feature>
<feature type="sequence variant" id="VAR_081866" description="In HRPTTN; decreased localization at the plasma membrane; loss of calcium ion import across plasma membrane; dbSNP:rs1586190048." evidence="11">
    <original>C</original>
    <variation>Y</variation>
    <location>
        <position position="212"/>
    </location>
</feature>
<feature type="sequence variant" id="VAR_081867" description="In HRPTTN; decreased localization at the plasma membrane; no change in calcium ion import across plasma membrane; dbSNP:rs529924080." evidence="11 12">
    <original>I</original>
    <variation>T</variation>
    <location>
        <position position="223"/>
    </location>
</feature>
<feature type="sequence variant" id="VAR_052393" description="In dbSNP:rs4987665.">
    <original>R</original>
    <variation>Q</variation>
    <location>
        <position position="399"/>
    </location>
</feature>
<feature type="sequence variant" id="VAR_022252" description="In dbSNP:rs4987667." evidence="6 13">
    <original>M</original>
    <variation>V</variation>
    <location>
        <position position="418"/>
    </location>
</feature>
<feature type="sequence variant" id="VAR_081868" description="In HRPTTN; decreased localization at the plasma membrane; loss of calcium ion import across plasma membrane; dbSNP:rs1281361203." evidence="11">
    <original>R</original>
    <variation>Q</variation>
    <location>
        <position position="425"/>
    </location>
</feature>
<feature type="sequence variant" id="VAR_081869" description="In HRPTTN; decreased localization at the plasma membrane; loss of calcium ion import across plasma membrane; dbSNP:rs1327315227." evidence="11 12">
    <original>G</original>
    <variation>R</variation>
    <location>
        <position position="428"/>
    </location>
</feature>
<feature type="sequence variant" id="VAR_081870" description="In HRPTTN; induces cell death most likely through intracellular calcium overload; increased calcium ion import across plasma membrane; may lack intracellular calcium-dependent inactivation." evidence="11">
    <original>G</original>
    <variation>E</variation>
    <location>
        <position position="451"/>
    </location>
</feature>
<feature type="sequence variant" id="VAR_081871" description="In HRPTTN; decreased localization at the plasma membrane; loss of calcium ion import across plasma membrane; dbSNP:rs755916513." evidence="11">
    <original>R</original>
    <variation>W</variation>
    <location>
        <position position="483"/>
    </location>
</feature>
<feature type="sequence variant" id="VAR_022253" description="In dbSNP:rs4987682." evidence="6 13">
    <original>M</original>
    <variation>T</variation>
    <location>
        <position position="721"/>
    </location>
</feature>
<feature type="mutagenesis site" description="Decreases channel opening, and thereby decreases channel activity." evidence="10">
    <original>R</original>
    <variation>E</variation>
    <location>
        <position position="510"/>
    </location>
</feature>
<feature type="mutagenesis site" description="Decreases channel activity." evidence="10">
    <original>Q</original>
    <variation>A</variation>
    <location>
        <position position="523"/>
    </location>
</feature>
<feature type="mutagenesis site" description="Abolishes channel activity." evidence="7">
    <original>D</original>
    <variation>A</variation>
    <location>
        <position position="582"/>
    </location>
</feature>
<feature type="mutagenesis site" description="Decreases channel opening, and thereby strongly decreases channel activity." evidence="10">
    <original>A</original>
    <variation>T</variation>
    <location>
        <position position="606"/>
    </location>
</feature>
<feature type="mutagenesis site" description="Abolishes phosphorylation by PKC/PRKCA, achieves faster channel inactivation and no effect on binding to calmodulin." evidence="5">
    <original>T</original>
    <variation>A</variation>
    <location>
        <position position="742"/>
    </location>
</feature>
<feature type="sequence conflict" description="In Ref. 1; AAG41951." evidence="17" ref="1">
    <original>N</original>
    <variation>D</variation>
    <location>
        <position position="77"/>
    </location>
</feature>
<feature type="sequence conflict" description="In Ref. 1; AAG41951." evidence="17" ref="1">
    <original>Q</original>
    <variation>H</variation>
    <location>
        <position position="114"/>
    </location>
</feature>
<feature type="helix" evidence="27">
    <location>
        <begin position="68"/>
        <end position="82"/>
    </location>
</feature>
<feature type="turn" evidence="27">
    <location>
        <begin position="83"/>
        <end position="86"/>
    </location>
</feature>
<feature type="turn" evidence="27">
    <location>
        <begin position="89"/>
        <end position="96"/>
    </location>
</feature>
<feature type="helix" evidence="27">
    <location>
        <begin position="99"/>
        <end position="106"/>
    </location>
</feature>
<feature type="strand" evidence="25">
    <location>
        <begin position="107"/>
        <end position="109"/>
    </location>
</feature>
<feature type="turn" evidence="31">
    <location>
        <begin position="110"/>
        <end position="113"/>
    </location>
</feature>
<feature type="strand" evidence="23">
    <location>
        <begin position="117"/>
        <end position="119"/>
    </location>
</feature>
<feature type="helix" evidence="27">
    <location>
        <begin position="122"/>
        <end position="128"/>
    </location>
</feature>
<feature type="helix" evidence="27">
    <location>
        <begin position="134"/>
        <end position="141"/>
    </location>
</feature>
<feature type="helix" evidence="27">
    <location>
        <begin position="143"/>
        <end position="145"/>
    </location>
</feature>
<feature type="strand" evidence="27">
    <location>
        <begin position="152"/>
        <end position="155"/>
    </location>
</feature>
<feature type="helix" evidence="27">
    <location>
        <begin position="160"/>
        <end position="166"/>
    </location>
</feature>
<feature type="helix" evidence="27">
    <location>
        <begin position="171"/>
        <end position="176"/>
    </location>
</feature>
<feature type="helix" evidence="27">
    <location>
        <begin position="177"/>
        <end position="179"/>
    </location>
</feature>
<feature type="helix" evidence="27">
    <location>
        <begin position="190"/>
        <end position="192"/>
    </location>
</feature>
<feature type="strand" evidence="27">
    <location>
        <begin position="193"/>
        <end position="195"/>
    </location>
</feature>
<feature type="strand" evidence="28">
    <location>
        <begin position="196"/>
        <end position="199"/>
    </location>
</feature>
<feature type="helix" evidence="27">
    <location>
        <begin position="206"/>
        <end position="212"/>
    </location>
</feature>
<feature type="helix" evidence="27">
    <location>
        <begin position="216"/>
        <end position="223"/>
    </location>
</feature>
<feature type="turn" evidence="27">
    <location>
        <begin position="224"/>
        <end position="226"/>
    </location>
</feature>
<feature type="helix" evidence="27">
    <location>
        <begin position="239"/>
        <end position="244"/>
    </location>
</feature>
<feature type="strand" evidence="30">
    <location>
        <begin position="245"/>
        <end position="247"/>
    </location>
</feature>
<feature type="helix" evidence="27">
    <location>
        <begin position="249"/>
        <end position="260"/>
    </location>
</feature>
<feature type="strand" evidence="27">
    <location>
        <begin position="266"/>
        <end position="268"/>
    </location>
</feature>
<feature type="helix" evidence="27">
    <location>
        <begin position="272"/>
        <end position="274"/>
    </location>
</feature>
<feature type="helix" evidence="27">
    <location>
        <begin position="283"/>
        <end position="290"/>
    </location>
</feature>
<feature type="helix" evidence="27">
    <location>
        <begin position="293"/>
        <end position="300"/>
    </location>
</feature>
<feature type="helix" evidence="27">
    <location>
        <begin position="301"/>
        <end position="303"/>
    </location>
</feature>
<feature type="strand" evidence="27">
    <location>
        <begin position="304"/>
        <end position="310"/>
    </location>
</feature>
<feature type="strand" evidence="27">
    <location>
        <begin position="313"/>
        <end position="318"/>
    </location>
</feature>
<feature type="turn" evidence="27">
    <location>
        <begin position="321"/>
        <end position="323"/>
    </location>
</feature>
<feature type="strand" evidence="27">
    <location>
        <begin position="327"/>
        <end position="329"/>
    </location>
</feature>
<feature type="helix" evidence="27">
    <location>
        <begin position="332"/>
        <end position="337"/>
    </location>
</feature>
<feature type="helix" evidence="27">
    <location>
        <begin position="343"/>
        <end position="349"/>
    </location>
</feature>
<feature type="helix" evidence="27">
    <location>
        <begin position="353"/>
        <end position="363"/>
    </location>
</feature>
<feature type="helix" evidence="27">
    <location>
        <begin position="365"/>
        <end position="388"/>
    </location>
</feature>
<feature type="strand" evidence="27">
    <location>
        <begin position="392"/>
        <end position="394"/>
    </location>
</feature>
<feature type="strand" evidence="29">
    <location>
        <begin position="400"/>
        <end position="403"/>
    </location>
</feature>
<feature type="strand" evidence="27">
    <location>
        <begin position="408"/>
        <end position="410"/>
    </location>
</feature>
<feature type="turn" evidence="27">
    <location>
        <begin position="413"/>
        <end position="415"/>
    </location>
</feature>
<feature type="helix" evidence="27">
    <location>
        <begin position="420"/>
        <end position="441"/>
    </location>
</feature>
<feature type="turn" evidence="27">
    <location>
        <begin position="445"/>
        <end position="448"/>
    </location>
</feature>
<feature type="strand" evidence="27">
    <location>
        <begin position="452"/>
        <end position="454"/>
    </location>
</feature>
<feature type="helix" evidence="27">
    <location>
        <begin position="455"/>
        <end position="458"/>
    </location>
</feature>
<feature type="turn" evidence="27">
    <location>
        <begin position="459"/>
        <end position="462"/>
    </location>
</feature>
<feature type="helix" evidence="27">
    <location>
        <begin position="465"/>
        <end position="484"/>
    </location>
</feature>
<feature type="helix" evidence="27">
    <location>
        <begin position="491"/>
        <end position="503"/>
    </location>
</feature>
<feature type="helix" evidence="27">
    <location>
        <begin position="504"/>
        <end position="511"/>
    </location>
</feature>
<feature type="turn" evidence="27">
    <location>
        <begin position="513"/>
        <end position="515"/>
    </location>
</feature>
<feature type="helix" evidence="27">
    <location>
        <begin position="516"/>
        <end position="526"/>
    </location>
</feature>
<feature type="helix" evidence="27">
    <location>
        <begin position="529"/>
        <end position="551"/>
    </location>
</feature>
<feature type="helix" evidence="27">
    <location>
        <begin position="552"/>
        <end position="554"/>
    </location>
</feature>
<feature type="turn" evidence="27">
    <location>
        <begin position="557"/>
        <end position="559"/>
    </location>
</feature>
<feature type="strand" evidence="24">
    <location>
        <begin position="562"/>
        <end position="565"/>
    </location>
</feature>
<feature type="helix" evidence="27">
    <location>
        <begin position="566"/>
        <end position="577"/>
    </location>
</feature>
<feature type="strand" evidence="27">
    <location>
        <begin position="587"/>
        <end position="589"/>
    </location>
</feature>
<feature type="helix" evidence="27">
    <location>
        <begin position="593"/>
        <end position="621"/>
    </location>
</feature>
<feature type="turn" evidence="27">
    <location>
        <begin position="622"/>
        <end position="625"/>
    </location>
</feature>
<feature type="helix" evidence="27">
    <location>
        <begin position="629"/>
        <end position="646"/>
    </location>
</feature>
<feature type="turn" evidence="26">
    <location>
        <begin position="650"/>
        <end position="652"/>
    </location>
</feature>
<feature type="strand" evidence="27">
    <location>
        <begin position="656"/>
        <end position="659"/>
    </location>
</feature>
<feature type="strand" evidence="27">
    <location>
        <begin position="661"/>
        <end position="665"/>
    </location>
</feature>
<feature type="strand" evidence="27">
    <location>
        <begin position="669"/>
        <end position="676"/>
    </location>
</feature>
<feature type="turn" evidence="32">
    <location>
        <begin position="680"/>
        <end position="682"/>
    </location>
</feature>
<feature type="helix" evidence="32">
    <location>
        <begin position="686"/>
        <end position="689"/>
    </location>
</feature>
<feature type="helix" evidence="32">
    <location>
        <begin position="729"/>
        <end position="742"/>
    </location>
</feature>
<name>TRPV6_HUMAN</name>
<comment type="function">
    <text evidence="1 4 5 6 7 8 10 11">Calcium selective cation channel that mediates Ca(2+) uptake in various tissues, including the intestine (PubMed:11097838, PubMed:11248124, PubMed:11278579, PubMed:15184369, PubMed:23612980, PubMed:29258289). Important for normal Ca(2+) ion homeostasis in the body, including bone and skin (By similarity). The channel is activated by low internal calcium level, probably including intracellular calcium store depletion, and the current exhibits an inward rectification (PubMed:15184369). Inactivation includes both a rapid Ca(2+)-dependent and a slower Ca(2+)-calmodulin-dependent mechanism; the latter may be regulated by phosphorylation. In vitro, is slowly inhibited by Mg(2+) in a voltage-independent manner. Heteromeric assembly with TRPV5 seems to modify channel properties. TRPV5-TRPV6 heteromultimeric concatemers exhibit voltage-dependent gating.</text>
</comment>
<comment type="catalytic activity">
    <reaction evidence="4 5 6 7">
        <text>Ca(2+)(in) = Ca(2+)(out)</text>
        <dbReference type="Rhea" id="RHEA:29671"/>
        <dbReference type="ChEBI" id="CHEBI:29108"/>
    </reaction>
</comment>
<comment type="subunit">
    <text evidence="1 5 9 10">Homotetramer (PubMed:29258289). Probably also forms heterotetramers with TRPV5. Interacts with TRPV5. Interacts with S100A10 and probably with the ANAX2-S100A10 heterotetramer. The interaction with S100A10 is required for the trafficking to the plasma membrane. Interacts with BSPRY (By similarity). Interacts with TCAF1 and TCAF2 isoform 2 (PubMed:25559186). Interacts with calmodulin (PubMed:11248124).</text>
</comment>
<comment type="interaction">
    <interactant intactId="EBI-7198335">
        <id>Q9H1D0</id>
    </interactant>
    <interactant intactId="EBI-968788">
        <id>P18031</id>
        <label>PTPN1</label>
    </interactant>
    <organismsDiffer>false</organismsDiffer>
    <experiments>6</experiments>
</comment>
<comment type="subcellular location">
    <subcellularLocation>
        <location evidence="4 5 6 7 8 10 11">Cell membrane</location>
        <topology evidence="10">Multi-pass membrane protein</topology>
    </subcellularLocation>
</comment>
<comment type="alternative products">
    <event type="alternative splicing"/>
    <isoform>
        <id>Q9H1D0-1</id>
        <name>1</name>
        <sequence type="displayed"/>
    </isoform>
    <isoform>
        <id>Q9H1D0-2</id>
        <name>2</name>
        <sequence type="described" ref="VSP_013439"/>
    </isoform>
</comment>
<comment type="tissue specificity">
    <text evidence="4 6 8">Expressed at high levels in the gastrointestinal tract, including esophagus, stomach, duodenum, jejunum, ileum and colon, and in pancreas, placenta, prostate and salivary gland. Expressed at moderate levels in liver, kidney and testis. Expressed in trophoblasts of placenta villus trees (at protein level) (PubMed:23612980). Expressed in locally advanced prostate cancer, metastatic and androgen-insensitive prostatic lesions but not detected in healthy prostate tissue and benign prostatic hyperplasia.</text>
</comment>
<comment type="PTM">
    <text evidence="1 8">Glycosylated.</text>
</comment>
<comment type="PTM">
    <text evidence="2 5">Phosphorylation at Tyr-201 by SRC leads to an increased calcium influx through the channel. Probably dephosphorylated at this site by PTPN1 (By similarity). Phosphorylation by PRKCA at the calmodulin binding site delays channel inactivation (PubMed:11248124).</text>
</comment>
<comment type="disease" evidence="11 12">
    <disease id="DI-05388">
        <name>Hyperparathyroidism, transient neonatal</name>
        <acronym>HRPTTN</acronym>
        <description>An autosomal recessive disease characterized by impaired transplacental maternal-fetal transport of calcium, high serum PTH levels and signs of metabolic bone disease in the neonatal period. Skeletal anomalies include generalized osteopenia, narrow chest, short ribs with multiple healing fractures, and bowing or fractures of long bones. Affected individuals experience postnatal respiratory and feeding difficulties. The condition improves within a short time after birth once calcium is provided orally.</description>
        <dbReference type="MIM" id="618188"/>
    </disease>
    <text>The disease is caused by variants affecting the gene represented in this entry.</text>
</comment>
<comment type="similarity">
    <text evidence="17">Belongs to the transient receptor (TC 1.A.4) family. TrpV subfamily. TRPV6 sub-subfamily.</text>
</comment>
<comment type="sequence caution" evidence="18">
    <conflict type="miscellaneous discrepancy">
        <sequence resource="EMBL-CDS" id="AAK50426"/>
    </conflict>
    <text>Unusual initiator. The initiator methionine is coded by a non-canonical ACG threonine codon.</text>
</comment>
<comment type="sequence caution" evidence="18">
    <conflict type="miscellaneous discrepancy">
        <sequence resource="EMBL-CDS" id="AAL40230"/>
    </conflict>
    <text>Unusual initiator. The initiator methionine is coded by a non-canonical ACG threonine codon.</text>
</comment>
<comment type="sequence caution" evidence="18">
    <conflict type="miscellaneous discrepancy">
        <sequence resource="EMBL-CDS" id="AAM00356"/>
    </conflict>
    <text>Unusual initiator. The initiator methionine is coded by a non-canonical ACG threonine codon.</text>
</comment>
<comment type="sequence caution" evidence="18">
    <conflict type="miscellaneous discrepancy">
        <sequence resource="EMBL-CDS" id="AAO38052"/>
    </conflict>
    <text>Unusual initiator. The initiator methionine is coded by a non-canonical ACG threonine codon.</text>
</comment>
<comment type="sequence caution" evidence="18">
    <conflict type="miscellaneous discrepancy">
        <sequence resource="EMBL-CDS" id="BAF84396"/>
    </conflict>
    <text>Unusual initiator. The initiator methionine is coded by a non-canonical ACG threonine codon.</text>
</comment>
<comment type="sequence caution" evidence="18">
    <conflict type="miscellaneous discrepancy">
        <sequence resource="EMBL-CDS" id="CAC20416"/>
    </conflict>
    <text>Unusual initiator. The initiator methionine is coded by a non-canonical ACG threonine codon.</text>
</comment>
<comment type="sequence caution" evidence="18">
    <conflict type="miscellaneous discrepancy">
        <sequence resource="EMBL-CDS" id="CAC20417"/>
    </conflict>
    <text>Unusual initiator. The initiator methionine is coded by a non-canonical ACG threonine codon.</text>
</comment>
<comment type="sequence caution" evidence="18">
    <conflict type="miscellaneous discrepancy">
        <sequence resource="EMBL-CDS" id="CAD32311"/>
    </conflict>
    <text>Unusual initiator. The initiator methionine is coded by a non-canonical ACG threonine codon.</text>
</comment>
<comment type="online information" name="Wikipedia">
    <link uri="https://en.wikipedia.org/wiki/TRPV6"/>
    <text>TRPV6 entry</text>
</comment>
<comment type="online information" name="Atlas of Genetics and Cytogenetics in Oncology and Haematology">
    <link uri="https://atlasgeneticsoncology.org/gene/44425/TRPV6"/>
</comment>
<organism>
    <name type="scientific">Homo sapiens</name>
    <name type="common">Human</name>
    <dbReference type="NCBI Taxonomy" id="9606"/>
    <lineage>
        <taxon>Eukaryota</taxon>
        <taxon>Metazoa</taxon>
        <taxon>Chordata</taxon>
        <taxon>Craniata</taxon>
        <taxon>Vertebrata</taxon>
        <taxon>Euteleostomi</taxon>
        <taxon>Mammalia</taxon>
        <taxon>Eutheria</taxon>
        <taxon>Euarchontoglires</taxon>
        <taxon>Primates</taxon>
        <taxon>Haplorrhini</taxon>
        <taxon>Catarrhini</taxon>
        <taxon>Hominidae</taxon>
        <taxon>Homo</taxon>
    </lineage>
</organism>